<feature type="signal peptide" evidence="1">
    <location>
        <begin position="1"/>
        <end position="23"/>
    </location>
</feature>
<feature type="chain" id="PRO_1000144739" description="UPF0412 protein YaaI">
    <location>
        <begin position="24"/>
        <end position="134"/>
    </location>
</feature>
<organism>
    <name type="scientific">Escherichia coli O17:K52:H18 (strain UMN026 / ExPEC)</name>
    <dbReference type="NCBI Taxonomy" id="585056"/>
    <lineage>
        <taxon>Bacteria</taxon>
        <taxon>Pseudomonadati</taxon>
        <taxon>Pseudomonadota</taxon>
        <taxon>Gammaproteobacteria</taxon>
        <taxon>Enterobacterales</taxon>
        <taxon>Enterobacteriaceae</taxon>
        <taxon>Escherichia</taxon>
    </lineage>
</organism>
<reference key="1">
    <citation type="journal article" date="2009" name="PLoS Genet.">
        <title>Organised genome dynamics in the Escherichia coli species results in highly diverse adaptive paths.</title>
        <authorList>
            <person name="Touchon M."/>
            <person name="Hoede C."/>
            <person name="Tenaillon O."/>
            <person name="Barbe V."/>
            <person name="Baeriswyl S."/>
            <person name="Bidet P."/>
            <person name="Bingen E."/>
            <person name="Bonacorsi S."/>
            <person name="Bouchier C."/>
            <person name="Bouvet O."/>
            <person name="Calteau A."/>
            <person name="Chiapello H."/>
            <person name="Clermont O."/>
            <person name="Cruveiller S."/>
            <person name="Danchin A."/>
            <person name="Diard M."/>
            <person name="Dossat C."/>
            <person name="Karoui M.E."/>
            <person name="Frapy E."/>
            <person name="Garry L."/>
            <person name="Ghigo J.M."/>
            <person name="Gilles A.M."/>
            <person name="Johnson J."/>
            <person name="Le Bouguenec C."/>
            <person name="Lescat M."/>
            <person name="Mangenot S."/>
            <person name="Martinez-Jehanne V."/>
            <person name="Matic I."/>
            <person name="Nassif X."/>
            <person name="Oztas S."/>
            <person name="Petit M.A."/>
            <person name="Pichon C."/>
            <person name="Rouy Z."/>
            <person name="Ruf C.S."/>
            <person name="Schneider D."/>
            <person name="Tourret J."/>
            <person name="Vacherie B."/>
            <person name="Vallenet D."/>
            <person name="Medigue C."/>
            <person name="Rocha E.P.C."/>
            <person name="Denamur E."/>
        </authorList>
    </citation>
    <scope>NUCLEOTIDE SEQUENCE [LARGE SCALE GENOMIC DNA]</scope>
    <source>
        <strain>UMN026 / ExPEC</strain>
    </source>
</reference>
<comment type="similarity">
    <text evidence="1">Belongs to the UPF0412 family.</text>
</comment>
<gene>
    <name evidence="1" type="primary">yaaI</name>
    <name type="ordered locus">ECUMN_0013</name>
</gene>
<keyword id="KW-0732">Signal</keyword>
<proteinExistence type="inferred from homology"/>
<protein>
    <recommendedName>
        <fullName evidence="1">UPF0412 protein YaaI</fullName>
    </recommendedName>
</protein>
<dbReference type="EMBL" id="CU928163">
    <property type="protein sequence ID" value="CAR11237.1"/>
    <property type="molecule type" value="Genomic_DNA"/>
</dbReference>
<dbReference type="RefSeq" id="WP_000843584.1">
    <property type="nucleotide sequence ID" value="NC_011751.1"/>
</dbReference>
<dbReference type="RefSeq" id="YP_002410792.1">
    <property type="nucleotide sequence ID" value="NC_011751.1"/>
</dbReference>
<dbReference type="STRING" id="585056.ECUMN_0013"/>
<dbReference type="KEGG" id="eum:ECUMN_0013"/>
<dbReference type="PATRIC" id="fig|585056.7.peg.196"/>
<dbReference type="HOGENOM" id="CLU_158661_0_0_6"/>
<dbReference type="Proteomes" id="UP000007097">
    <property type="component" value="Chromosome"/>
</dbReference>
<dbReference type="HAMAP" id="MF_01372">
    <property type="entry name" value="UPF0412"/>
    <property type="match status" value="1"/>
</dbReference>
<dbReference type="InterPro" id="IPR020240">
    <property type="entry name" value="UPF0412_YaaI"/>
</dbReference>
<dbReference type="NCBIfam" id="NF007541">
    <property type="entry name" value="PRK10154.1"/>
    <property type="match status" value="1"/>
</dbReference>
<dbReference type="Pfam" id="PF10807">
    <property type="entry name" value="DUF2541"/>
    <property type="match status" value="1"/>
</dbReference>
<name>YAAI_ECOLU</name>
<sequence length="134" mass="14510">MKSVFTLSASLAISLMLCCTAQANDHKILGVIAMPRNETNDLALKLPVCRIVKRIQLSADHGDLQLSGASVYFKAARSASQSLNIPSEIKEGQTTDWININSDNDNKRCVSKITFSGHTVNSSDMATLKIIGDD</sequence>
<accession>B7N7N7</accession>
<evidence type="ECO:0000255" key="1">
    <source>
        <dbReference type="HAMAP-Rule" id="MF_01372"/>
    </source>
</evidence>